<reference key="1">
    <citation type="journal article" date="2004" name="Science">
        <title>The Ashbya gossypii genome as a tool for mapping the ancient Saccharomyces cerevisiae genome.</title>
        <authorList>
            <person name="Dietrich F.S."/>
            <person name="Voegeli S."/>
            <person name="Brachat S."/>
            <person name="Lerch A."/>
            <person name="Gates K."/>
            <person name="Steiner S."/>
            <person name="Mohr C."/>
            <person name="Poehlmann R."/>
            <person name="Luedi P."/>
            <person name="Choi S."/>
            <person name="Wing R.A."/>
            <person name="Flavier A."/>
            <person name="Gaffney T.D."/>
            <person name="Philippsen P."/>
        </authorList>
    </citation>
    <scope>NUCLEOTIDE SEQUENCE [LARGE SCALE GENOMIC DNA]</scope>
    <source>
        <strain>ATCC 10895 / CBS 109.51 / FGSC 9923 / NRRL Y-1056</strain>
    </source>
</reference>
<reference key="2">
    <citation type="journal article" date="2013" name="G3 (Bethesda)">
        <title>Genomes of Ashbya fungi isolated from insects reveal four mating-type loci, numerous translocations, lack of transposons, and distinct gene duplications.</title>
        <authorList>
            <person name="Dietrich F.S."/>
            <person name="Voegeli S."/>
            <person name="Kuo S."/>
            <person name="Philippsen P."/>
        </authorList>
    </citation>
    <scope>GENOME REANNOTATION</scope>
    <source>
        <strain>ATCC 10895 / CBS 109.51 / FGSC 9923 / NRRL Y-1056</strain>
    </source>
</reference>
<sequence>MKRTAVIFIEKATPSTITQFHDILSTHVLAIQEKWSFELKTFRSSIKNLPPSDTKVLYSLQLTHRDNQTVVIKNQSAIVTGQHSTDALTSNGCSSGFPEPFDNILTSKLSNIWTQRQSTKGNFGTTYKTSELIIRASNVFSSSGFKGLLLEIECTDPVSAEEFDRRVANIRAMLSEIDINDYKLNKDEMNEGKPVFLCDLAYQYVKVLD</sequence>
<gene>
    <name type="primary">SRB2</name>
    <name type="synonym">MED20</name>
    <name type="ordered locus">AAL082W</name>
</gene>
<keyword id="KW-0010">Activator</keyword>
<keyword id="KW-0539">Nucleus</keyword>
<keyword id="KW-1185">Reference proteome</keyword>
<keyword id="KW-0804">Transcription</keyword>
<keyword id="KW-0805">Transcription regulation</keyword>
<accession>Q75F10</accession>
<protein>
    <recommendedName>
        <fullName>Mediator of RNA polymerase II transcription subunit 20</fullName>
    </recommendedName>
    <alternativeName>
        <fullName>Mediator complex subunit 20</fullName>
    </alternativeName>
</protein>
<evidence type="ECO:0000250" key="1"/>
<evidence type="ECO:0000305" key="2"/>
<dbReference type="EMBL" id="AE016814">
    <property type="protein sequence ID" value="AAS50284.1"/>
    <property type="molecule type" value="Genomic_DNA"/>
</dbReference>
<dbReference type="RefSeq" id="NP_982460.1">
    <property type="nucleotide sequence ID" value="NM_207813.1"/>
</dbReference>
<dbReference type="SMR" id="Q75F10"/>
<dbReference type="FunCoup" id="Q75F10">
    <property type="interactions" value="278"/>
</dbReference>
<dbReference type="STRING" id="284811.Q75F10"/>
<dbReference type="EnsemblFungi" id="AAS50284">
    <property type="protein sequence ID" value="AAS50284"/>
    <property type="gene ID" value="AGOS_AAL082W"/>
</dbReference>
<dbReference type="GeneID" id="4618661"/>
<dbReference type="KEGG" id="ago:AGOS_AAL082W"/>
<dbReference type="eggNOG" id="ENOG502RXMU">
    <property type="taxonomic scope" value="Eukaryota"/>
</dbReference>
<dbReference type="HOGENOM" id="CLU_065844_1_0_1"/>
<dbReference type="InParanoid" id="Q75F10"/>
<dbReference type="OMA" id="WTQRQSI"/>
<dbReference type="OrthoDB" id="1854899at2759"/>
<dbReference type="Proteomes" id="UP000000591">
    <property type="component" value="Chromosome I"/>
</dbReference>
<dbReference type="GO" id="GO:0070847">
    <property type="term" value="C:core mediator complex"/>
    <property type="evidence" value="ECO:0007669"/>
    <property type="project" value="EnsemblFungi"/>
</dbReference>
<dbReference type="GO" id="GO:0016592">
    <property type="term" value="C:mediator complex"/>
    <property type="evidence" value="ECO:0000318"/>
    <property type="project" value="GO_Central"/>
</dbReference>
<dbReference type="GO" id="GO:0019904">
    <property type="term" value="F:protein domain specific binding"/>
    <property type="evidence" value="ECO:0007669"/>
    <property type="project" value="EnsemblFungi"/>
</dbReference>
<dbReference type="GO" id="GO:0001094">
    <property type="term" value="F:TFIID-class transcription factor complex binding"/>
    <property type="evidence" value="ECO:0007669"/>
    <property type="project" value="EnsemblFungi"/>
</dbReference>
<dbReference type="GO" id="GO:0003713">
    <property type="term" value="F:transcription coactivator activity"/>
    <property type="evidence" value="ECO:0000318"/>
    <property type="project" value="GO_Central"/>
</dbReference>
<dbReference type="GO" id="GO:0031669">
    <property type="term" value="P:cellular response to nutrient levels"/>
    <property type="evidence" value="ECO:0007669"/>
    <property type="project" value="EnsemblFungi"/>
</dbReference>
<dbReference type="GO" id="GO:0010688">
    <property type="term" value="P:negative regulation of ribosomal protein gene transcription by RNA polymerase II"/>
    <property type="evidence" value="ECO:0007669"/>
    <property type="project" value="EnsemblFungi"/>
</dbReference>
<dbReference type="GO" id="GO:0032968">
    <property type="term" value="P:positive regulation of transcription elongation by RNA polymerase II"/>
    <property type="evidence" value="ECO:0007669"/>
    <property type="project" value="EnsemblFungi"/>
</dbReference>
<dbReference type="GO" id="GO:0060261">
    <property type="term" value="P:positive regulation of transcription initiation by RNA polymerase II"/>
    <property type="evidence" value="ECO:0007669"/>
    <property type="project" value="EnsemblFungi"/>
</dbReference>
<dbReference type="GO" id="GO:0006357">
    <property type="term" value="P:regulation of transcription by RNA polymerase II"/>
    <property type="evidence" value="ECO:0000318"/>
    <property type="project" value="GO_Central"/>
</dbReference>
<dbReference type="GO" id="GO:0051123">
    <property type="term" value="P:RNA polymerase II preinitiation complex assembly"/>
    <property type="evidence" value="ECO:0007669"/>
    <property type="project" value="EnsemblFungi"/>
</dbReference>
<dbReference type="FunFam" id="3.30.310.180:FF:000001">
    <property type="entry name" value="Mediator of RNA polymerase II transcription subunit 20"/>
    <property type="match status" value="1"/>
</dbReference>
<dbReference type="Gene3D" id="3.30.310.180">
    <property type="match status" value="2"/>
</dbReference>
<dbReference type="InterPro" id="IPR016532">
    <property type="entry name" value="Med20"/>
</dbReference>
<dbReference type="InterPro" id="IPR013921">
    <property type="entry name" value="Mediator_Med20"/>
</dbReference>
<dbReference type="PANTHER" id="PTHR12465:SF0">
    <property type="entry name" value="MEDIATOR OF RNA POLYMERASE II TRANSCRIPTION SUBUNIT 20"/>
    <property type="match status" value="1"/>
</dbReference>
<dbReference type="PANTHER" id="PTHR12465">
    <property type="entry name" value="UBIQUITIN SPECIFIC PROTEASE HOMOLOG 49"/>
    <property type="match status" value="1"/>
</dbReference>
<dbReference type="Pfam" id="PF08612">
    <property type="entry name" value="Med20"/>
    <property type="match status" value="1"/>
</dbReference>
<dbReference type="PIRSF" id="PIRSF007945">
    <property type="entry name" value="SRB2"/>
    <property type="match status" value="1"/>
</dbReference>
<organism>
    <name type="scientific">Eremothecium gossypii (strain ATCC 10895 / CBS 109.51 / FGSC 9923 / NRRL Y-1056)</name>
    <name type="common">Yeast</name>
    <name type="synonym">Ashbya gossypii</name>
    <dbReference type="NCBI Taxonomy" id="284811"/>
    <lineage>
        <taxon>Eukaryota</taxon>
        <taxon>Fungi</taxon>
        <taxon>Dikarya</taxon>
        <taxon>Ascomycota</taxon>
        <taxon>Saccharomycotina</taxon>
        <taxon>Saccharomycetes</taxon>
        <taxon>Saccharomycetales</taxon>
        <taxon>Saccharomycetaceae</taxon>
        <taxon>Eremothecium</taxon>
    </lineage>
</organism>
<name>MED20_EREGS</name>
<proteinExistence type="inferred from homology"/>
<feature type="chain" id="PRO_0000308563" description="Mediator of RNA polymerase II transcription subunit 20">
    <location>
        <begin position="1"/>
        <end position="209"/>
    </location>
</feature>
<comment type="function">
    <text evidence="1">Component of the Mediator complex, a coactivator involved in the regulated transcription of nearly all RNA polymerase II-dependent genes. Mediator functions as a bridge to convey information from gene-specific regulatory proteins to the basal RNA polymerase II transcription machinery. Mediator is recruited to promoters by direct interactions with regulatory proteins and serves as a scaffold for the assembly of a functional preinitiation complex with RNA polymerase II and the general transcription factors (By similarity).</text>
</comment>
<comment type="subunit">
    <text evidence="1">Component of the Mediator complex.</text>
</comment>
<comment type="subcellular location">
    <subcellularLocation>
        <location evidence="1">Nucleus</location>
    </subcellularLocation>
</comment>
<comment type="similarity">
    <text evidence="2">Belongs to the Mediator complex subunit 20 family.</text>
</comment>